<reference key="1">
    <citation type="submission" date="2007-10" db="EMBL/GenBank/DDBJ databases">
        <title>Complete sequence of chromosome 1 of Burkholderia multivorans ATCC 17616.</title>
        <authorList>
            <person name="Copeland A."/>
            <person name="Lucas S."/>
            <person name="Lapidus A."/>
            <person name="Barry K."/>
            <person name="Glavina del Rio T."/>
            <person name="Dalin E."/>
            <person name="Tice H."/>
            <person name="Pitluck S."/>
            <person name="Chain P."/>
            <person name="Malfatti S."/>
            <person name="Shin M."/>
            <person name="Vergez L."/>
            <person name="Schmutz J."/>
            <person name="Larimer F."/>
            <person name="Land M."/>
            <person name="Hauser L."/>
            <person name="Kyrpides N."/>
            <person name="Kim E."/>
            <person name="Tiedje J."/>
            <person name="Richardson P."/>
        </authorList>
    </citation>
    <scope>NUCLEOTIDE SEQUENCE [LARGE SCALE GENOMIC DNA]</scope>
    <source>
        <strain>ATCC 17616 / 249</strain>
    </source>
</reference>
<reference key="2">
    <citation type="submission" date="2007-04" db="EMBL/GenBank/DDBJ databases">
        <title>Complete genome sequence of Burkholderia multivorans ATCC 17616.</title>
        <authorList>
            <person name="Ohtsubo Y."/>
            <person name="Yamashita A."/>
            <person name="Kurokawa K."/>
            <person name="Takami H."/>
            <person name="Yuhara S."/>
            <person name="Nishiyama E."/>
            <person name="Endo R."/>
            <person name="Miyazaki R."/>
            <person name="Ono A."/>
            <person name="Yano K."/>
            <person name="Ito M."/>
            <person name="Sota M."/>
            <person name="Yuji N."/>
            <person name="Hattori M."/>
            <person name="Tsuda M."/>
        </authorList>
    </citation>
    <scope>NUCLEOTIDE SEQUENCE [LARGE SCALE GENOMIC DNA]</scope>
    <source>
        <strain>ATCC 17616 / 249</strain>
    </source>
</reference>
<gene>
    <name evidence="1" type="primary">rplN</name>
    <name type="ordered locus">Bmul_0259</name>
    <name type="ordered locus">BMULJ_02995</name>
</gene>
<name>RL14_BURM1</name>
<organism>
    <name type="scientific">Burkholderia multivorans (strain ATCC 17616 / 249)</name>
    <dbReference type="NCBI Taxonomy" id="395019"/>
    <lineage>
        <taxon>Bacteria</taxon>
        <taxon>Pseudomonadati</taxon>
        <taxon>Pseudomonadota</taxon>
        <taxon>Betaproteobacteria</taxon>
        <taxon>Burkholderiales</taxon>
        <taxon>Burkholderiaceae</taxon>
        <taxon>Burkholderia</taxon>
        <taxon>Burkholderia cepacia complex</taxon>
    </lineage>
</organism>
<proteinExistence type="inferred from homology"/>
<feature type="chain" id="PRO_0000355810" description="Large ribosomal subunit protein uL14">
    <location>
        <begin position="1"/>
        <end position="122"/>
    </location>
</feature>
<evidence type="ECO:0000255" key="1">
    <source>
        <dbReference type="HAMAP-Rule" id="MF_01367"/>
    </source>
</evidence>
<evidence type="ECO:0000305" key="2"/>
<comment type="function">
    <text evidence="1">Binds to 23S rRNA. Forms part of two intersubunit bridges in the 70S ribosome.</text>
</comment>
<comment type="subunit">
    <text evidence="1">Part of the 50S ribosomal subunit. Forms a cluster with proteins L3 and L19. In the 70S ribosome, L14 and L19 interact and together make contacts with the 16S rRNA in bridges B5 and B8.</text>
</comment>
<comment type="similarity">
    <text evidence="1">Belongs to the universal ribosomal protein uL14 family.</text>
</comment>
<comment type="sequence caution" evidence="2">
    <conflict type="erroneous initiation">
        <sequence resource="EMBL-CDS" id="ABX13954"/>
    </conflict>
</comment>
<dbReference type="EMBL" id="CP000868">
    <property type="protein sequence ID" value="ABX13954.1"/>
    <property type="status" value="ALT_INIT"/>
    <property type="molecule type" value="Genomic_DNA"/>
</dbReference>
<dbReference type="EMBL" id="AP009385">
    <property type="protein sequence ID" value="BAG44880.1"/>
    <property type="molecule type" value="Genomic_DNA"/>
</dbReference>
<dbReference type="RefSeq" id="WP_004197951.1">
    <property type="nucleotide sequence ID" value="NC_010804.1"/>
</dbReference>
<dbReference type="SMR" id="A9ADK3"/>
<dbReference type="STRING" id="395019.BMULJ_02995"/>
<dbReference type="GeneID" id="93171007"/>
<dbReference type="KEGG" id="bmj:BMULJ_02995"/>
<dbReference type="KEGG" id="bmu:Bmul_0259"/>
<dbReference type="eggNOG" id="COG0093">
    <property type="taxonomic scope" value="Bacteria"/>
</dbReference>
<dbReference type="HOGENOM" id="CLU_095071_2_1_4"/>
<dbReference type="Proteomes" id="UP000008815">
    <property type="component" value="Chromosome 1"/>
</dbReference>
<dbReference type="GO" id="GO:0022625">
    <property type="term" value="C:cytosolic large ribosomal subunit"/>
    <property type="evidence" value="ECO:0007669"/>
    <property type="project" value="TreeGrafter"/>
</dbReference>
<dbReference type="GO" id="GO:0070180">
    <property type="term" value="F:large ribosomal subunit rRNA binding"/>
    <property type="evidence" value="ECO:0007669"/>
    <property type="project" value="TreeGrafter"/>
</dbReference>
<dbReference type="GO" id="GO:0003735">
    <property type="term" value="F:structural constituent of ribosome"/>
    <property type="evidence" value="ECO:0007669"/>
    <property type="project" value="InterPro"/>
</dbReference>
<dbReference type="GO" id="GO:0006412">
    <property type="term" value="P:translation"/>
    <property type="evidence" value="ECO:0007669"/>
    <property type="project" value="UniProtKB-UniRule"/>
</dbReference>
<dbReference type="CDD" id="cd00337">
    <property type="entry name" value="Ribosomal_uL14"/>
    <property type="match status" value="1"/>
</dbReference>
<dbReference type="FunFam" id="2.40.150.20:FF:000001">
    <property type="entry name" value="50S ribosomal protein L14"/>
    <property type="match status" value="1"/>
</dbReference>
<dbReference type="Gene3D" id="2.40.150.20">
    <property type="entry name" value="Ribosomal protein L14"/>
    <property type="match status" value="1"/>
</dbReference>
<dbReference type="HAMAP" id="MF_01367">
    <property type="entry name" value="Ribosomal_uL14"/>
    <property type="match status" value="1"/>
</dbReference>
<dbReference type="InterPro" id="IPR000218">
    <property type="entry name" value="Ribosomal_uL14"/>
</dbReference>
<dbReference type="InterPro" id="IPR005745">
    <property type="entry name" value="Ribosomal_uL14_bac-type"/>
</dbReference>
<dbReference type="InterPro" id="IPR019972">
    <property type="entry name" value="Ribosomal_uL14_CS"/>
</dbReference>
<dbReference type="InterPro" id="IPR036853">
    <property type="entry name" value="Ribosomal_uL14_sf"/>
</dbReference>
<dbReference type="NCBIfam" id="TIGR01067">
    <property type="entry name" value="rplN_bact"/>
    <property type="match status" value="1"/>
</dbReference>
<dbReference type="PANTHER" id="PTHR11761">
    <property type="entry name" value="50S/60S RIBOSOMAL PROTEIN L14/L23"/>
    <property type="match status" value="1"/>
</dbReference>
<dbReference type="PANTHER" id="PTHR11761:SF3">
    <property type="entry name" value="LARGE RIBOSOMAL SUBUNIT PROTEIN UL14M"/>
    <property type="match status" value="1"/>
</dbReference>
<dbReference type="Pfam" id="PF00238">
    <property type="entry name" value="Ribosomal_L14"/>
    <property type="match status" value="1"/>
</dbReference>
<dbReference type="SMART" id="SM01374">
    <property type="entry name" value="Ribosomal_L14"/>
    <property type="match status" value="1"/>
</dbReference>
<dbReference type="SUPFAM" id="SSF50193">
    <property type="entry name" value="Ribosomal protein L14"/>
    <property type="match status" value="1"/>
</dbReference>
<dbReference type="PROSITE" id="PS00049">
    <property type="entry name" value="RIBOSOMAL_L14"/>
    <property type="match status" value="1"/>
</dbReference>
<protein>
    <recommendedName>
        <fullName evidence="1">Large ribosomal subunit protein uL14</fullName>
    </recommendedName>
    <alternativeName>
        <fullName evidence="2">50S ribosomal protein L14</fullName>
    </alternativeName>
</protein>
<keyword id="KW-1185">Reference proteome</keyword>
<keyword id="KW-0687">Ribonucleoprotein</keyword>
<keyword id="KW-0689">Ribosomal protein</keyword>
<keyword id="KW-0694">RNA-binding</keyword>
<keyword id="KW-0699">rRNA-binding</keyword>
<sequence length="122" mass="13454">MIQTESRLEVADNTGAREVMCIKVLGGSKRRYASIGDIIKVSVKEATPRGRVKKGEIYNAVVVRTAKGVRRQDGSLIKFDGNAAVLLNNKLEPIGTRIFGPVTRELRSERFMKIVSLAPEVL</sequence>
<accession>A9ADK3</accession>
<accession>B3D4B8</accession>